<comment type="function">
    <text evidence="1">Catalyzes the condensation of (S)-aspartate-beta-semialdehyde [(S)-ASA] and pyruvate to 4-hydroxy-tetrahydrodipicolinate (HTPA).</text>
</comment>
<comment type="catalytic activity">
    <reaction evidence="1">
        <text>L-aspartate 4-semialdehyde + pyruvate = (2S,4S)-4-hydroxy-2,3,4,5-tetrahydrodipicolinate + H2O + H(+)</text>
        <dbReference type="Rhea" id="RHEA:34171"/>
        <dbReference type="ChEBI" id="CHEBI:15361"/>
        <dbReference type="ChEBI" id="CHEBI:15377"/>
        <dbReference type="ChEBI" id="CHEBI:15378"/>
        <dbReference type="ChEBI" id="CHEBI:67139"/>
        <dbReference type="ChEBI" id="CHEBI:537519"/>
        <dbReference type="EC" id="4.3.3.7"/>
    </reaction>
</comment>
<comment type="pathway">
    <text evidence="1">Amino-acid biosynthesis; L-lysine biosynthesis via DAP pathway; (S)-tetrahydrodipicolinate from L-aspartate: step 3/4.</text>
</comment>
<comment type="subunit">
    <text evidence="1">Homotetramer; dimer of dimers.</text>
</comment>
<comment type="subcellular location">
    <subcellularLocation>
        <location evidence="1">Cytoplasm</location>
    </subcellularLocation>
</comment>
<comment type="similarity">
    <text evidence="1">Belongs to the DapA family.</text>
</comment>
<comment type="caution">
    <text evidence="2">Was originally thought to be a dihydrodipicolinate synthase (DHDPS), catalyzing the condensation of (S)-aspartate-beta-semialdehyde [(S)-ASA] and pyruvate to dihydrodipicolinate (DHDP). However, it was shown in E.coli that the product of the enzymatic reaction is not dihydrodipicolinate but in fact (4S)-4-hydroxy-2,3,4,5-tetrahydro-(2S)-dipicolinic acid (HTPA), and that the consecutive dehydration reaction leading to DHDP is not spontaneous but catalyzed by DapB.</text>
</comment>
<dbReference type="EC" id="4.3.3.7" evidence="1"/>
<dbReference type="EMBL" id="AE010300">
    <property type="protein sequence ID" value="AAN50504.1"/>
    <property type="molecule type" value="Genomic_DNA"/>
</dbReference>
<dbReference type="RefSeq" id="NP_713486.1">
    <property type="nucleotide sequence ID" value="NC_004342.2"/>
</dbReference>
<dbReference type="SMR" id="Q8F132"/>
<dbReference type="FunCoup" id="Q8F132">
    <property type="interactions" value="455"/>
</dbReference>
<dbReference type="STRING" id="189518.LA_3306"/>
<dbReference type="PaxDb" id="189518-LA_3306"/>
<dbReference type="EnsemblBacteria" id="AAN50504">
    <property type="protein sequence ID" value="AAN50504"/>
    <property type="gene ID" value="LA_3306"/>
</dbReference>
<dbReference type="KEGG" id="lil:LA_3306"/>
<dbReference type="PATRIC" id="fig|189518.3.peg.3275"/>
<dbReference type="HOGENOM" id="CLU_049343_7_1_12"/>
<dbReference type="InParanoid" id="Q8F132"/>
<dbReference type="OrthoDB" id="9782828at2"/>
<dbReference type="UniPathway" id="UPA00034">
    <property type="reaction ID" value="UER00017"/>
</dbReference>
<dbReference type="Proteomes" id="UP000001408">
    <property type="component" value="Chromosome I"/>
</dbReference>
<dbReference type="GO" id="GO:0005829">
    <property type="term" value="C:cytosol"/>
    <property type="evidence" value="ECO:0000318"/>
    <property type="project" value="GO_Central"/>
</dbReference>
<dbReference type="GO" id="GO:0008840">
    <property type="term" value="F:4-hydroxy-tetrahydrodipicolinate synthase activity"/>
    <property type="evidence" value="ECO:0000318"/>
    <property type="project" value="GO_Central"/>
</dbReference>
<dbReference type="GO" id="GO:0019877">
    <property type="term" value="P:diaminopimelate biosynthetic process"/>
    <property type="evidence" value="ECO:0007669"/>
    <property type="project" value="UniProtKB-UniRule"/>
</dbReference>
<dbReference type="GO" id="GO:0009089">
    <property type="term" value="P:lysine biosynthetic process via diaminopimelate"/>
    <property type="evidence" value="ECO:0007669"/>
    <property type="project" value="UniProtKB-UniRule"/>
</dbReference>
<dbReference type="CDD" id="cd00950">
    <property type="entry name" value="DHDPS"/>
    <property type="match status" value="1"/>
</dbReference>
<dbReference type="Gene3D" id="3.20.20.70">
    <property type="entry name" value="Aldolase class I"/>
    <property type="match status" value="1"/>
</dbReference>
<dbReference type="HAMAP" id="MF_00418">
    <property type="entry name" value="DapA"/>
    <property type="match status" value="1"/>
</dbReference>
<dbReference type="InterPro" id="IPR013785">
    <property type="entry name" value="Aldolase_TIM"/>
</dbReference>
<dbReference type="InterPro" id="IPR005263">
    <property type="entry name" value="DapA"/>
</dbReference>
<dbReference type="InterPro" id="IPR002220">
    <property type="entry name" value="DapA-like"/>
</dbReference>
<dbReference type="InterPro" id="IPR020625">
    <property type="entry name" value="Schiff_base-form_aldolases_AS"/>
</dbReference>
<dbReference type="InterPro" id="IPR020624">
    <property type="entry name" value="Schiff_base-form_aldolases_CS"/>
</dbReference>
<dbReference type="NCBIfam" id="TIGR00674">
    <property type="entry name" value="dapA"/>
    <property type="match status" value="1"/>
</dbReference>
<dbReference type="PANTHER" id="PTHR12128:SF66">
    <property type="entry name" value="4-HYDROXY-2-OXOGLUTARATE ALDOLASE, MITOCHONDRIAL"/>
    <property type="match status" value="1"/>
</dbReference>
<dbReference type="PANTHER" id="PTHR12128">
    <property type="entry name" value="DIHYDRODIPICOLINATE SYNTHASE"/>
    <property type="match status" value="1"/>
</dbReference>
<dbReference type="Pfam" id="PF00701">
    <property type="entry name" value="DHDPS"/>
    <property type="match status" value="1"/>
</dbReference>
<dbReference type="PIRSF" id="PIRSF001365">
    <property type="entry name" value="DHDPS"/>
    <property type="match status" value="1"/>
</dbReference>
<dbReference type="PRINTS" id="PR00146">
    <property type="entry name" value="DHPICSNTHASE"/>
</dbReference>
<dbReference type="SMART" id="SM01130">
    <property type="entry name" value="DHDPS"/>
    <property type="match status" value="1"/>
</dbReference>
<dbReference type="SUPFAM" id="SSF51569">
    <property type="entry name" value="Aldolase"/>
    <property type="match status" value="1"/>
</dbReference>
<dbReference type="PROSITE" id="PS00665">
    <property type="entry name" value="DHDPS_1"/>
    <property type="match status" value="1"/>
</dbReference>
<dbReference type="PROSITE" id="PS00666">
    <property type="entry name" value="DHDPS_2"/>
    <property type="match status" value="1"/>
</dbReference>
<protein>
    <recommendedName>
        <fullName evidence="1">4-hydroxy-tetrahydrodipicolinate synthase</fullName>
        <shortName evidence="1">HTPA synthase</shortName>
        <ecNumber evidence="1">4.3.3.7</ecNumber>
    </recommendedName>
</protein>
<evidence type="ECO:0000255" key="1">
    <source>
        <dbReference type="HAMAP-Rule" id="MF_00418"/>
    </source>
</evidence>
<evidence type="ECO:0000305" key="2"/>
<accession>Q8F132</accession>
<gene>
    <name evidence="1" type="primary">dapA</name>
    <name type="ordered locus">LA_3306</name>
</gene>
<name>DAPA_LEPIN</name>
<organism>
    <name type="scientific">Leptospira interrogans serogroup Icterohaemorrhagiae serovar Lai (strain 56601)</name>
    <dbReference type="NCBI Taxonomy" id="189518"/>
    <lineage>
        <taxon>Bacteria</taxon>
        <taxon>Pseudomonadati</taxon>
        <taxon>Spirochaetota</taxon>
        <taxon>Spirochaetia</taxon>
        <taxon>Leptospirales</taxon>
        <taxon>Leptospiraceae</taxon>
        <taxon>Leptospira</taxon>
    </lineage>
</organism>
<feature type="chain" id="PRO_0000103122" description="4-hydroxy-tetrahydrodipicolinate synthase">
    <location>
        <begin position="1"/>
        <end position="307"/>
    </location>
</feature>
<feature type="active site" description="Proton donor/acceptor" evidence="1">
    <location>
        <position position="145"/>
    </location>
</feature>
<feature type="active site" description="Schiff-base intermediate with substrate" evidence="1">
    <location>
        <position position="173"/>
    </location>
</feature>
<feature type="binding site" evidence="1">
    <location>
        <position position="57"/>
    </location>
    <ligand>
        <name>pyruvate</name>
        <dbReference type="ChEBI" id="CHEBI:15361"/>
    </ligand>
</feature>
<feature type="binding site" evidence="1">
    <location>
        <position position="215"/>
    </location>
    <ligand>
        <name>pyruvate</name>
        <dbReference type="ChEBI" id="CHEBI:15361"/>
    </ligand>
</feature>
<feature type="site" description="Part of a proton relay during catalysis" evidence="1">
    <location>
        <position position="56"/>
    </location>
</feature>
<feature type="site" description="Part of a proton relay during catalysis" evidence="1">
    <location>
        <position position="119"/>
    </location>
</feature>
<keyword id="KW-0028">Amino-acid biosynthesis</keyword>
<keyword id="KW-0963">Cytoplasm</keyword>
<keyword id="KW-0220">Diaminopimelate biosynthesis</keyword>
<keyword id="KW-0456">Lyase</keyword>
<keyword id="KW-0457">Lysine biosynthesis</keyword>
<keyword id="KW-1185">Reference proteome</keyword>
<keyword id="KW-0704">Schiff base</keyword>
<sequence>MIAKSGSNQESNPMFQGVYTAIITPFKNDKIDYDSYFKLLEKQIKAGVSGVVPCGTTGESPTLSHSEHAELIRETVKAVQGKIQVVAGTGSNSTKEAIELTEAACKDGVDGILSVNPYYNKPTQEGLFQHFKSIAEHSTVPVMLYNIPGRTSVNLLPETVLRLSEVKQIRSMKEATGDLGQMGKLISLVGNKMTVLSGDDNLTLPLLAIGGVGVVSVISNLFPKALVQLVESFQQGKISEAKKIHYDFIEVFALAFMETNPIPIKAAMCWFGHCGPEIRLPLTPLSQNETSSKFKKVLEGLKEKGYE</sequence>
<reference key="1">
    <citation type="journal article" date="2003" name="Nature">
        <title>Unique physiological and pathogenic features of Leptospira interrogans revealed by whole-genome sequencing.</title>
        <authorList>
            <person name="Ren S.-X."/>
            <person name="Fu G."/>
            <person name="Jiang X.-G."/>
            <person name="Zeng R."/>
            <person name="Miao Y.-G."/>
            <person name="Xu H."/>
            <person name="Zhang Y.-X."/>
            <person name="Xiong H."/>
            <person name="Lu G."/>
            <person name="Lu L.-F."/>
            <person name="Jiang H.-Q."/>
            <person name="Jia J."/>
            <person name="Tu Y.-F."/>
            <person name="Jiang J.-X."/>
            <person name="Gu W.-Y."/>
            <person name="Zhang Y.-Q."/>
            <person name="Cai Z."/>
            <person name="Sheng H.-H."/>
            <person name="Yin H.-F."/>
            <person name="Zhang Y."/>
            <person name="Zhu G.-F."/>
            <person name="Wan M."/>
            <person name="Huang H.-L."/>
            <person name="Qian Z."/>
            <person name="Wang S.-Y."/>
            <person name="Ma W."/>
            <person name="Yao Z.-J."/>
            <person name="Shen Y."/>
            <person name="Qiang B.-Q."/>
            <person name="Xia Q.-C."/>
            <person name="Guo X.-K."/>
            <person name="Danchin A."/>
            <person name="Saint Girons I."/>
            <person name="Somerville R.L."/>
            <person name="Wen Y.-M."/>
            <person name="Shi M.-H."/>
            <person name="Chen Z."/>
            <person name="Xu J.-G."/>
            <person name="Zhao G.-P."/>
        </authorList>
    </citation>
    <scope>NUCLEOTIDE SEQUENCE [LARGE SCALE GENOMIC DNA]</scope>
    <source>
        <strain>56601</strain>
    </source>
</reference>
<proteinExistence type="inferred from homology"/>